<evidence type="ECO:0000255" key="1">
    <source>
        <dbReference type="HAMAP-Rule" id="MF_01576"/>
    </source>
</evidence>
<sequence length="283" mass="30820">MIARILDGRTCAEKVKARVKENIRLLQEKGLPSPGLAVILVGNDPASATYVAHKERACQAVGIRSTVYRMPNTITESELASKIDECNRDSNTHGILLQLPLPAHIDPANLLERIRPDKDVDGFHPYNLGRLVQRRPALRPCTPYGVMTLLTETHENLEGKHAVIVGASNIVGRPMALELLLAKCTVTVCHRFTRDLAEHVKSAELLIVAIGKPGIIQSEWIKPGAIVIDVGFSRLSPNKIAGDIDFETAKERASWITPVPGGVGPMTVATLLENTLQAAQTFL</sequence>
<protein>
    <recommendedName>
        <fullName evidence="1">Bifunctional protein FolD</fullName>
    </recommendedName>
    <domain>
        <recommendedName>
            <fullName evidence="1">Methylenetetrahydrofolate dehydrogenase</fullName>
            <ecNumber evidence="1">1.5.1.5</ecNumber>
        </recommendedName>
    </domain>
    <domain>
        <recommendedName>
            <fullName evidence="1">Methenyltetrahydrofolate cyclohydrolase</fullName>
            <ecNumber evidence="1">3.5.4.9</ecNumber>
        </recommendedName>
    </domain>
</protein>
<organism>
    <name type="scientific">Coxiella burnetii (strain Dugway 5J108-111)</name>
    <dbReference type="NCBI Taxonomy" id="434922"/>
    <lineage>
        <taxon>Bacteria</taxon>
        <taxon>Pseudomonadati</taxon>
        <taxon>Pseudomonadota</taxon>
        <taxon>Gammaproteobacteria</taxon>
        <taxon>Legionellales</taxon>
        <taxon>Coxiellaceae</taxon>
        <taxon>Coxiella</taxon>
    </lineage>
</organism>
<comment type="function">
    <text evidence="1">Catalyzes the oxidation of 5,10-methylenetetrahydrofolate to 5,10-methenyltetrahydrofolate and then the hydrolysis of 5,10-methenyltetrahydrofolate to 10-formyltetrahydrofolate.</text>
</comment>
<comment type="catalytic activity">
    <reaction evidence="1">
        <text>(6R)-5,10-methylene-5,6,7,8-tetrahydrofolate + NADP(+) = (6R)-5,10-methenyltetrahydrofolate + NADPH</text>
        <dbReference type="Rhea" id="RHEA:22812"/>
        <dbReference type="ChEBI" id="CHEBI:15636"/>
        <dbReference type="ChEBI" id="CHEBI:57455"/>
        <dbReference type="ChEBI" id="CHEBI:57783"/>
        <dbReference type="ChEBI" id="CHEBI:58349"/>
        <dbReference type="EC" id="1.5.1.5"/>
    </reaction>
</comment>
<comment type="catalytic activity">
    <reaction evidence="1">
        <text>(6R)-5,10-methenyltetrahydrofolate + H2O = (6R)-10-formyltetrahydrofolate + H(+)</text>
        <dbReference type="Rhea" id="RHEA:23700"/>
        <dbReference type="ChEBI" id="CHEBI:15377"/>
        <dbReference type="ChEBI" id="CHEBI:15378"/>
        <dbReference type="ChEBI" id="CHEBI:57455"/>
        <dbReference type="ChEBI" id="CHEBI:195366"/>
        <dbReference type="EC" id="3.5.4.9"/>
    </reaction>
</comment>
<comment type="pathway">
    <text evidence="1">One-carbon metabolism; tetrahydrofolate interconversion.</text>
</comment>
<comment type="subunit">
    <text evidence="1">Homodimer.</text>
</comment>
<comment type="similarity">
    <text evidence="1">Belongs to the tetrahydrofolate dehydrogenase/cyclohydrolase family.</text>
</comment>
<gene>
    <name evidence="1" type="primary">folD</name>
    <name type="ordered locus">CBUD_1768</name>
</gene>
<name>FOLD_COXBN</name>
<accession>A9KGQ5</accession>
<feature type="chain" id="PRO_1000087897" description="Bifunctional protein FolD">
    <location>
        <begin position="1"/>
        <end position="283"/>
    </location>
</feature>
<feature type="binding site" evidence="1">
    <location>
        <begin position="166"/>
        <end position="168"/>
    </location>
    <ligand>
        <name>NADP(+)</name>
        <dbReference type="ChEBI" id="CHEBI:58349"/>
    </ligand>
</feature>
<dbReference type="EC" id="1.5.1.5" evidence="1"/>
<dbReference type="EC" id="3.5.4.9" evidence="1"/>
<dbReference type="EMBL" id="CP000733">
    <property type="protein sequence ID" value="ABS76955.1"/>
    <property type="molecule type" value="Genomic_DNA"/>
</dbReference>
<dbReference type="RefSeq" id="WP_010957497.1">
    <property type="nucleotide sequence ID" value="NC_009727.1"/>
</dbReference>
<dbReference type="SMR" id="A9KGQ5"/>
<dbReference type="KEGG" id="cbd:CBUD_1768"/>
<dbReference type="HOGENOM" id="CLU_034045_2_1_6"/>
<dbReference type="UniPathway" id="UPA00193"/>
<dbReference type="Proteomes" id="UP000008555">
    <property type="component" value="Chromosome"/>
</dbReference>
<dbReference type="GO" id="GO:0005829">
    <property type="term" value="C:cytosol"/>
    <property type="evidence" value="ECO:0007669"/>
    <property type="project" value="TreeGrafter"/>
</dbReference>
<dbReference type="GO" id="GO:0004477">
    <property type="term" value="F:methenyltetrahydrofolate cyclohydrolase activity"/>
    <property type="evidence" value="ECO:0007669"/>
    <property type="project" value="UniProtKB-UniRule"/>
</dbReference>
<dbReference type="GO" id="GO:0004488">
    <property type="term" value="F:methylenetetrahydrofolate dehydrogenase (NADP+) activity"/>
    <property type="evidence" value="ECO:0007669"/>
    <property type="project" value="UniProtKB-UniRule"/>
</dbReference>
<dbReference type="GO" id="GO:0000105">
    <property type="term" value="P:L-histidine biosynthetic process"/>
    <property type="evidence" value="ECO:0007669"/>
    <property type="project" value="UniProtKB-KW"/>
</dbReference>
<dbReference type="GO" id="GO:0009086">
    <property type="term" value="P:methionine biosynthetic process"/>
    <property type="evidence" value="ECO:0007669"/>
    <property type="project" value="UniProtKB-KW"/>
</dbReference>
<dbReference type="GO" id="GO:0006164">
    <property type="term" value="P:purine nucleotide biosynthetic process"/>
    <property type="evidence" value="ECO:0007669"/>
    <property type="project" value="UniProtKB-KW"/>
</dbReference>
<dbReference type="GO" id="GO:0035999">
    <property type="term" value="P:tetrahydrofolate interconversion"/>
    <property type="evidence" value="ECO:0007669"/>
    <property type="project" value="UniProtKB-UniRule"/>
</dbReference>
<dbReference type="CDD" id="cd01080">
    <property type="entry name" value="NAD_bind_m-THF_DH_Cyclohyd"/>
    <property type="match status" value="1"/>
</dbReference>
<dbReference type="FunFam" id="3.40.50.720:FF:000006">
    <property type="entry name" value="Bifunctional protein FolD"/>
    <property type="match status" value="1"/>
</dbReference>
<dbReference type="FunFam" id="3.40.50.10860:FF:000005">
    <property type="entry name" value="C-1-tetrahydrofolate synthase, cytoplasmic, putative"/>
    <property type="match status" value="1"/>
</dbReference>
<dbReference type="Gene3D" id="3.40.50.10860">
    <property type="entry name" value="Leucine Dehydrogenase, chain A, domain 1"/>
    <property type="match status" value="1"/>
</dbReference>
<dbReference type="Gene3D" id="3.40.50.720">
    <property type="entry name" value="NAD(P)-binding Rossmann-like Domain"/>
    <property type="match status" value="1"/>
</dbReference>
<dbReference type="HAMAP" id="MF_01576">
    <property type="entry name" value="THF_DHG_CYH"/>
    <property type="match status" value="1"/>
</dbReference>
<dbReference type="InterPro" id="IPR046346">
    <property type="entry name" value="Aminoacid_DH-like_N_sf"/>
</dbReference>
<dbReference type="InterPro" id="IPR036291">
    <property type="entry name" value="NAD(P)-bd_dom_sf"/>
</dbReference>
<dbReference type="InterPro" id="IPR000672">
    <property type="entry name" value="THF_DH/CycHdrlase"/>
</dbReference>
<dbReference type="InterPro" id="IPR020630">
    <property type="entry name" value="THF_DH/CycHdrlase_cat_dom"/>
</dbReference>
<dbReference type="InterPro" id="IPR020867">
    <property type="entry name" value="THF_DH/CycHdrlase_CS"/>
</dbReference>
<dbReference type="InterPro" id="IPR020631">
    <property type="entry name" value="THF_DH/CycHdrlase_NAD-bd_dom"/>
</dbReference>
<dbReference type="NCBIfam" id="NF008058">
    <property type="entry name" value="PRK10792.1"/>
    <property type="match status" value="1"/>
</dbReference>
<dbReference type="NCBIfam" id="NF010783">
    <property type="entry name" value="PRK14186.1"/>
    <property type="match status" value="1"/>
</dbReference>
<dbReference type="PANTHER" id="PTHR48099:SF5">
    <property type="entry name" value="C-1-TETRAHYDROFOLATE SYNTHASE, CYTOPLASMIC"/>
    <property type="match status" value="1"/>
</dbReference>
<dbReference type="PANTHER" id="PTHR48099">
    <property type="entry name" value="C-1-TETRAHYDROFOLATE SYNTHASE, CYTOPLASMIC-RELATED"/>
    <property type="match status" value="1"/>
</dbReference>
<dbReference type="Pfam" id="PF00763">
    <property type="entry name" value="THF_DHG_CYH"/>
    <property type="match status" value="1"/>
</dbReference>
<dbReference type="Pfam" id="PF02882">
    <property type="entry name" value="THF_DHG_CYH_C"/>
    <property type="match status" value="1"/>
</dbReference>
<dbReference type="PRINTS" id="PR00085">
    <property type="entry name" value="THFDHDRGNASE"/>
</dbReference>
<dbReference type="SUPFAM" id="SSF53223">
    <property type="entry name" value="Aminoacid dehydrogenase-like, N-terminal domain"/>
    <property type="match status" value="1"/>
</dbReference>
<dbReference type="SUPFAM" id="SSF51735">
    <property type="entry name" value="NAD(P)-binding Rossmann-fold domains"/>
    <property type="match status" value="1"/>
</dbReference>
<dbReference type="PROSITE" id="PS00767">
    <property type="entry name" value="THF_DHG_CYH_2"/>
    <property type="match status" value="1"/>
</dbReference>
<proteinExistence type="inferred from homology"/>
<keyword id="KW-0028">Amino-acid biosynthesis</keyword>
<keyword id="KW-0368">Histidine biosynthesis</keyword>
<keyword id="KW-0378">Hydrolase</keyword>
<keyword id="KW-0486">Methionine biosynthesis</keyword>
<keyword id="KW-0511">Multifunctional enzyme</keyword>
<keyword id="KW-0521">NADP</keyword>
<keyword id="KW-0554">One-carbon metabolism</keyword>
<keyword id="KW-0560">Oxidoreductase</keyword>
<keyword id="KW-0658">Purine biosynthesis</keyword>
<reference key="1">
    <citation type="journal article" date="2009" name="Infect. Immun.">
        <title>Comparative genomics reveal extensive transposon-mediated genomic plasticity and diversity among potential effector proteins within the genus Coxiella.</title>
        <authorList>
            <person name="Beare P.A."/>
            <person name="Unsworth N."/>
            <person name="Andoh M."/>
            <person name="Voth D.E."/>
            <person name="Omsland A."/>
            <person name="Gilk S.D."/>
            <person name="Williams K.P."/>
            <person name="Sobral B.W."/>
            <person name="Kupko J.J. III"/>
            <person name="Porcella S.F."/>
            <person name="Samuel J.E."/>
            <person name="Heinzen R.A."/>
        </authorList>
    </citation>
    <scope>NUCLEOTIDE SEQUENCE [LARGE SCALE GENOMIC DNA]</scope>
    <source>
        <strain>Dugway 5J108-111</strain>
    </source>
</reference>